<accession>A7FID5</accession>
<dbReference type="EMBL" id="CP000720">
    <property type="protein sequence ID" value="ABS46804.1"/>
    <property type="molecule type" value="Genomic_DNA"/>
</dbReference>
<dbReference type="RefSeq" id="WP_012105131.1">
    <property type="nucleotide sequence ID" value="NC_009708.1"/>
</dbReference>
<dbReference type="SMR" id="A7FID5"/>
<dbReference type="KEGG" id="ypi:YpsIP31758_2040"/>
<dbReference type="HOGENOM" id="CLU_050555_3_1_6"/>
<dbReference type="Proteomes" id="UP000002412">
    <property type="component" value="Chromosome"/>
</dbReference>
<dbReference type="GO" id="GO:0005737">
    <property type="term" value="C:cytoplasm"/>
    <property type="evidence" value="ECO:0007669"/>
    <property type="project" value="UniProtKB-SubCell"/>
</dbReference>
<dbReference type="GO" id="GO:0005507">
    <property type="term" value="F:copper ion binding"/>
    <property type="evidence" value="ECO:0007669"/>
    <property type="project" value="TreeGrafter"/>
</dbReference>
<dbReference type="FunFam" id="3.20.20.380:FF:000001">
    <property type="entry name" value="Copper homeostasis protein CutC"/>
    <property type="match status" value="1"/>
</dbReference>
<dbReference type="Gene3D" id="3.20.20.380">
    <property type="entry name" value="Copper homeostasis (CutC) domain"/>
    <property type="match status" value="1"/>
</dbReference>
<dbReference type="HAMAP" id="MF_00795">
    <property type="entry name" value="CutC"/>
    <property type="match status" value="1"/>
</dbReference>
<dbReference type="InterPro" id="IPR005627">
    <property type="entry name" value="CutC-like"/>
</dbReference>
<dbReference type="InterPro" id="IPR036822">
    <property type="entry name" value="CutC-like_dom_sf"/>
</dbReference>
<dbReference type="NCBIfam" id="NF008603">
    <property type="entry name" value="PRK11572.1"/>
    <property type="match status" value="1"/>
</dbReference>
<dbReference type="PANTHER" id="PTHR12598">
    <property type="entry name" value="COPPER HOMEOSTASIS PROTEIN CUTC"/>
    <property type="match status" value="1"/>
</dbReference>
<dbReference type="PANTHER" id="PTHR12598:SF0">
    <property type="entry name" value="COPPER HOMEOSTASIS PROTEIN CUTC HOMOLOG"/>
    <property type="match status" value="1"/>
</dbReference>
<dbReference type="Pfam" id="PF03932">
    <property type="entry name" value="CutC"/>
    <property type="match status" value="1"/>
</dbReference>
<dbReference type="SUPFAM" id="SSF110395">
    <property type="entry name" value="CutC-like"/>
    <property type="match status" value="1"/>
</dbReference>
<sequence>MTKLEVCCYSVDCAQIAEKAGADRVELCCGQSEGGLTPSVGALIQARETVTIPVHPIVRPRGGDFCYSSNDFTIMKNDIARIRDLGFAGVVVGVLDTDGHIDMPRMREIMSVSGSLAVTFHRAFDMCQNPMIALKQLAELNVARILTSGQQQNAELGLALLKDLVAATKDQGPIIMAGAGVRLTNMQKFIDAGIRELHSSAGRTVPSTMRYRKAGVTMCADSDVDEFSHYCVDGEVVEAMKSLLVMGSPLAKHT</sequence>
<keyword id="KW-0963">Cytoplasm</keyword>
<reference key="1">
    <citation type="journal article" date="2007" name="PLoS Genet.">
        <title>The complete genome sequence of Yersinia pseudotuberculosis IP31758, the causative agent of Far East scarlet-like fever.</title>
        <authorList>
            <person name="Eppinger M."/>
            <person name="Rosovitz M.J."/>
            <person name="Fricke W.F."/>
            <person name="Rasko D.A."/>
            <person name="Kokorina G."/>
            <person name="Fayolle C."/>
            <person name="Lindler L.E."/>
            <person name="Carniel E."/>
            <person name="Ravel J."/>
        </authorList>
    </citation>
    <scope>NUCLEOTIDE SEQUENCE [LARGE SCALE GENOMIC DNA]</scope>
    <source>
        <strain>IP 31758</strain>
    </source>
</reference>
<name>CUTC_YERP3</name>
<gene>
    <name evidence="1" type="primary">cutC</name>
    <name type="ordered locus">YpsIP31758_2040</name>
</gene>
<comment type="subcellular location">
    <subcellularLocation>
        <location evidence="1">Cytoplasm</location>
    </subcellularLocation>
</comment>
<comment type="similarity">
    <text evidence="1">Belongs to the CutC family.</text>
</comment>
<comment type="caution">
    <text evidence="1">Once thought to be involved in copper homeostasis, experiments in E.coli have shown this is not the case.</text>
</comment>
<protein>
    <recommendedName>
        <fullName evidence="1">PF03932 family protein CutC</fullName>
    </recommendedName>
</protein>
<proteinExistence type="inferred from homology"/>
<evidence type="ECO:0000255" key="1">
    <source>
        <dbReference type="HAMAP-Rule" id="MF_00795"/>
    </source>
</evidence>
<organism>
    <name type="scientific">Yersinia pseudotuberculosis serotype O:1b (strain IP 31758)</name>
    <dbReference type="NCBI Taxonomy" id="349747"/>
    <lineage>
        <taxon>Bacteria</taxon>
        <taxon>Pseudomonadati</taxon>
        <taxon>Pseudomonadota</taxon>
        <taxon>Gammaproteobacteria</taxon>
        <taxon>Enterobacterales</taxon>
        <taxon>Yersiniaceae</taxon>
        <taxon>Yersinia</taxon>
    </lineage>
</organism>
<feature type="chain" id="PRO_1000062259" description="PF03932 family protein CutC">
    <location>
        <begin position="1"/>
        <end position="254"/>
    </location>
</feature>